<organism>
    <name type="scientific">Anaeromyxobacter sp. (strain K)</name>
    <dbReference type="NCBI Taxonomy" id="447217"/>
    <lineage>
        <taxon>Bacteria</taxon>
        <taxon>Pseudomonadati</taxon>
        <taxon>Myxococcota</taxon>
        <taxon>Myxococcia</taxon>
        <taxon>Myxococcales</taxon>
        <taxon>Cystobacterineae</taxon>
        <taxon>Anaeromyxobacteraceae</taxon>
        <taxon>Anaeromyxobacter</taxon>
    </lineage>
</organism>
<protein>
    <recommendedName>
        <fullName evidence="1">Large ribosomal subunit protein bL25</fullName>
    </recommendedName>
    <alternativeName>
        <fullName evidence="3">50S ribosomal protein L25</fullName>
    </alternativeName>
    <alternativeName>
        <fullName evidence="1">General stress protein CTC</fullName>
    </alternativeName>
</protein>
<gene>
    <name evidence="1" type="primary">rplY</name>
    <name evidence="1" type="synonym">ctc</name>
    <name type="ordered locus">AnaeK_0127</name>
</gene>
<reference key="1">
    <citation type="submission" date="2008-08" db="EMBL/GenBank/DDBJ databases">
        <title>Complete sequence of Anaeromyxobacter sp. K.</title>
        <authorList>
            <consortium name="US DOE Joint Genome Institute"/>
            <person name="Lucas S."/>
            <person name="Copeland A."/>
            <person name="Lapidus A."/>
            <person name="Glavina del Rio T."/>
            <person name="Dalin E."/>
            <person name="Tice H."/>
            <person name="Bruce D."/>
            <person name="Goodwin L."/>
            <person name="Pitluck S."/>
            <person name="Saunders E."/>
            <person name="Brettin T."/>
            <person name="Detter J.C."/>
            <person name="Han C."/>
            <person name="Larimer F."/>
            <person name="Land M."/>
            <person name="Hauser L."/>
            <person name="Kyrpides N."/>
            <person name="Ovchinnikiva G."/>
            <person name="Beliaev A."/>
        </authorList>
    </citation>
    <scope>NUCLEOTIDE SEQUENCE [LARGE SCALE GENOMIC DNA]</scope>
    <source>
        <strain>K</strain>
    </source>
</reference>
<comment type="function">
    <text evidence="1">This is one of the proteins that binds to the 5S RNA in the ribosome where it forms part of the central protuberance.</text>
</comment>
<comment type="subunit">
    <text evidence="1">Part of the 50S ribosomal subunit; part of the 5S rRNA/L5/L18/L25 subcomplex. Contacts the 5S rRNA. Binds to the 5S rRNA independently of L5 and L18.</text>
</comment>
<comment type="similarity">
    <text evidence="1">Belongs to the bacterial ribosomal protein bL25 family. CTC subfamily.</text>
</comment>
<feature type="chain" id="PRO_1000142484" description="Large ribosomal subunit protein bL25">
    <location>
        <begin position="1"/>
        <end position="240"/>
    </location>
</feature>
<feature type="region of interest" description="Disordered" evidence="2">
    <location>
        <begin position="1"/>
        <end position="20"/>
    </location>
</feature>
<feature type="region of interest" description="Disordered" evidence="2">
    <location>
        <begin position="204"/>
        <end position="240"/>
    </location>
</feature>
<feature type="compositionally biased region" description="Low complexity" evidence="2">
    <location>
        <begin position="204"/>
        <end position="229"/>
    </location>
</feature>
<feature type="compositionally biased region" description="Basic and acidic residues" evidence="2">
    <location>
        <begin position="230"/>
        <end position="240"/>
    </location>
</feature>
<name>RL25_ANASK</name>
<sequence length="240" mass="24822">MAENVLSAQKRTEQGKGPARRLRQQGLIPAVVYGGKREPTHVALDPATLLKAIETPHKFNTLLELQVDGASKHVLFKDYTVDPVTRKLLHADFLEVSLDQPVRVEVPVATVGRAAGVAEGGILSVATHEVVVEALPNKIPVRIEVDVTELKIGRSLHVSELKPPEGCKFKFQTDYVVVFVAVPEKEEVAAPVAAAVPGAAPAEGAAPAAGAAAPAGGAAPAAGAAPAKGGEAKGGDKAKK</sequence>
<dbReference type="EMBL" id="CP001131">
    <property type="protein sequence ID" value="ACG71370.1"/>
    <property type="molecule type" value="Genomic_DNA"/>
</dbReference>
<dbReference type="RefSeq" id="WP_012524206.1">
    <property type="nucleotide sequence ID" value="NC_011145.1"/>
</dbReference>
<dbReference type="SMR" id="B4ULC3"/>
<dbReference type="KEGG" id="ank:AnaeK_0127"/>
<dbReference type="HOGENOM" id="CLU_075939_2_1_7"/>
<dbReference type="OrthoDB" id="9786489at2"/>
<dbReference type="Proteomes" id="UP000001871">
    <property type="component" value="Chromosome"/>
</dbReference>
<dbReference type="GO" id="GO:0022625">
    <property type="term" value="C:cytosolic large ribosomal subunit"/>
    <property type="evidence" value="ECO:0007669"/>
    <property type="project" value="TreeGrafter"/>
</dbReference>
<dbReference type="GO" id="GO:0008097">
    <property type="term" value="F:5S rRNA binding"/>
    <property type="evidence" value="ECO:0007669"/>
    <property type="project" value="InterPro"/>
</dbReference>
<dbReference type="GO" id="GO:0003735">
    <property type="term" value="F:structural constituent of ribosome"/>
    <property type="evidence" value="ECO:0007669"/>
    <property type="project" value="InterPro"/>
</dbReference>
<dbReference type="GO" id="GO:0006412">
    <property type="term" value="P:translation"/>
    <property type="evidence" value="ECO:0007669"/>
    <property type="project" value="UniProtKB-UniRule"/>
</dbReference>
<dbReference type="CDD" id="cd00495">
    <property type="entry name" value="Ribosomal_L25_TL5_CTC"/>
    <property type="match status" value="1"/>
</dbReference>
<dbReference type="Gene3D" id="2.170.120.20">
    <property type="entry name" value="Ribosomal protein L25, beta domain"/>
    <property type="match status" value="1"/>
</dbReference>
<dbReference type="Gene3D" id="2.40.240.10">
    <property type="entry name" value="Ribosomal Protein L25, Chain P"/>
    <property type="match status" value="1"/>
</dbReference>
<dbReference type="HAMAP" id="MF_01334">
    <property type="entry name" value="Ribosomal_bL25_CTC"/>
    <property type="match status" value="1"/>
</dbReference>
<dbReference type="InterPro" id="IPR020056">
    <property type="entry name" value="Rbsml_bL25/Gln-tRNA_synth_N"/>
</dbReference>
<dbReference type="InterPro" id="IPR011035">
    <property type="entry name" value="Ribosomal_bL25/Gln-tRNA_synth"/>
</dbReference>
<dbReference type="InterPro" id="IPR020057">
    <property type="entry name" value="Ribosomal_bL25_b-dom"/>
</dbReference>
<dbReference type="InterPro" id="IPR037121">
    <property type="entry name" value="Ribosomal_bL25_C"/>
</dbReference>
<dbReference type="InterPro" id="IPR001021">
    <property type="entry name" value="Ribosomal_bL25_long"/>
</dbReference>
<dbReference type="InterPro" id="IPR029751">
    <property type="entry name" value="Ribosomal_L25_dom"/>
</dbReference>
<dbReference type="InterPro" id="IPR020930">
    <property type="entry name" value="Ribosomal_uL5_bac-type"/>
</dbReference>
<dbReference type="NCBIfam" id="TIGR00731">
    <property type="entry name" value="bL25_bact_ctc"/>
    <property type="match status" value="1"/>
</dbReference>
<dbReference type="NCBIfam" id="NF004128">
    <property type="entry name" value="PRK05618.1-2"/>
    <property type="match status" value="1"/>
</dbReference>
<dbReference type="NCBIfam" id="NF004137">
    <property type="entry name" value="PRK05618.3-3"/>
    <property type="match status" value="1"/>
</dbReference>
<dbReference type="PANTHER" id="PTHR33284">
    <property type="entry name" value="RIBOSOMAL PROTEIN L25/GLN-TRNA SYNTHETASE, ANTI-CODON-BINDING DOMAIN-CONTAINING PROTEIN"/>
    <property type="match status" value="1"/>
</dbReference>
<dbReference type="PANTHER" id="PTHR33284:SF1">
    <property type="entry name" value="RIBOSOMAL PROTEIN L25_GLN-TRNA SYNTHETASE, ANTI-CODON-BINDING DOMAIN-CONTAINING PROTEIN"/>
    <property type="match status" value="1"/>
</dbReference>
<dbReference type="Pfam" id="PF01386">
    <property type="entry name" value="Ribosomal_L25p"/>
    <property type="match status" value="1"/>
</dbReference>
<dbReference type="Pfam" id="PF14693">
    <property type="entry name" value="Ribosomal_TL5_C"/>
    <property type="match status" value="1"/>
</dbReference>
<dbReference type="SUPFAM" id="SSF50715">
    <property type="entry name" value="Ribosomal protein L25-like"/>
    <property type="match status" value="1"/>
</dbReference>
<keyword id="KW-0687">Ribonucleoprotein</keyword>
<keyword id="KW-0689">Ribosomal protein</keyword>
<keyword id="KW-0694">RNA-binding</keyword>
<keyword id="KW-0699">rRNA-binding</keyword>
<accession>B4ULC3</accession>
<proteinExistence type="inferred from homology"/>
<evidence type="ECO:0000255" key="1">
    <source>
        <dbReference type="HAMAP-Rule" id="MF_01334"/>
    </source>
</evidence>
<evidence type="ECO:0000256" key="2">
    <source>
        <dbReference type="SAM" id="MobiDB-lite"/>
    </source>
</evidence>
<evidence type="ECO:0000305" key="3"/>